<protein>
    <recommendedName>
        <fullName evidence="1">UDP-N-acetylglucosamine--N-acetylmuramyl-(pentapeptide) pyrophosphoryl-undecaprenol N-acetylglucosamine transferase</fullName>
        <ecNumber evidence="1">2.4.1.227</ecNumber>
    </recommendedName>
    <alternativeName>
        <fullName evidence="1">Undecaprenyl-PP-MurNAc-pentapeptide-UDPGlcNAc GlcNAc transferase</fullName>
    </alternativeName>
</protein>
<sequence>MAADGKNVLIMAGGTGGHVFPALACAREFQARGYTVHWLGTPRGIENELVPQAGLSLHLIQVSGLRGKGKLSLLKAPFTLVKAVLQARRIIGQLKPVCVIGFGGYVTGPGGVAARLCGVPLVIHEQNARAGTANRLLVPLSARVCEAFPGTFEAGEKLRTTGNPVRPELFMDAQRAPLGERRARLLVMGGSLGAEPLNKLLPKALSEVPADLRPEVFHQAGKHHAPITAERYQEAGVEAQVEPFIKDMAHAYGWADLVVCRAGALTVSELAAAGLPSMLVPLPHAIDDHQTHNAQYLAREGAAFLMPQATTGAAQLAERLNEVLMQPEKLNTMARTARRLAKPSATSTVVDICLEVAHG</sequence>
<keyword id="KW-0131">Cell cycle</keyword>
<keyword id="KW-0132">Cell division</keyword>
<keyword id="KW-0997">Cell inner membrane</keyword>
<keyword id="KW-1003">Cell membrane</keyword>
<keyword id="KW-0133">Cell shape</keyword>
<keyword id="KW-0961">Cell wall biogenesis/degradation</keyword>
<keyword id="KW-0328">Glycosyltransferase</keyword>
<keyword id="KW-0472">Membrane</keyword>
<keyword id="KW-0573">Peptidoglycan synthesis</keyword>
<keyword id="KW-0808">Transferase</keyword>
<name>MURG_PSEPW</name>
<reference key="1">
    <citation type="submission" date="2008-02" db="EMBL/GenBank/DDBJ databases">
        <title>Complete sequence of Pseudomonas putida W619.</title>
        <authorList>
            <person name="Copeland A."/>
            <person name="Lucas S."/>
            <person name="Lapidus A."/>
            <person name="Barry K."/>
            <person name="Detter J.C."/>
            <person name="Glavina del Rio T."/>
            <person name="Dalin E."/>
            <person name="Tice H."/>
            <person name="Pitluck S."/>
            <person name="Chain P."/>
            <person name="Malfatti S."/>
            <person name="Shin M."/>
            <person name="Vergez L."/>
            <person name="Schmutz J."/>
            <person name="Larimer F."/>
            <person name="Land M."/>
            <person name="Hauser L."/>
            <person name="Kyrpides N."/>
            <person name="Kim E."/>
            <person name="Taghavi S."/>
            <person name="Vangronsveld D."/>
            <person name="van der Lelie D."/>
            <person name="Richardson P."/>
        </authorList>
    </citation>
    <scope>NUCLEOTIDE SEQUENCE [LARGE SCALE GENOMIC DNA]</scope>
    <source>
        <strain>W619</strain>
    </source>
</reference>
<organism>
    <name type="scientific">Pseudomonas putida (strain W619)</name>
    <dbReference type="NCBI Taxonomy" id="390235"/>
    <lineage>
        <taxon>Bacteria</taxon>
        <taxon>Pseudomonadati</taxon>
        <taxon>Pseudomonadota</taxon>
        <taxon>Gammaproteobacteria</taxon>
        <taxon>Pseudomonadales</taxon>
        <taxon>Pseudomonadaceae</taxon>
        <taxon>Pseudomonas</taxon>
    </lineage>
</organism>
<feature type="chain" id="PRO_1000090462" description="UDP-N-acetylglucosamine--N-acetylmuramyl-(pentapeptide) pyrophosphoryl-undecaprenol N-acetylglucosamine transferase">
    <location>
        <begin position="1"/>
        <end position="359"/>
    </location>
</feature>
<feature type="binding site" evidence="1">
    <location>
        <begin position="15"/>
        <end position="17"/>
    </location>
    <ligand>
        <name>UDP-N-acetyl-alpha-D-glucosamine</name>
        <dbReference type="ChEBI" id="CHEBI:57705"/>
    </ligand>
</feature>
<feature type="binding site" evidence="1">
    <location>
        <position position="127"/>
    </location>
    <ligand>
        <name>UDP-N-acetyl-alpha-D-glucosamine</name>
        <dbReference type="ChEBI" id="CHEBI:57705"/>
    </ligand>
</feature>
<feature type="binding site" evidence="1">
    <location>
        <position position="166"/>
    </location>
    <ligand>
        <name>UDP-N-acetyl-alpha-D-glucosamine</name>
        <dbReference type="ChEBI" id="CHEBI:57705"/>
    </ligand>
</feature>
<feature type="binding site" evidence="1">
    <location>
        <position position="191"/>
    </location>
    <ligand>
        <name>UDP-N-acetyl-alpha-D-glucosamine</name>
        <dbReference type="ChEBI" id="CHEBI:57705"/>
    </ligand>
</feature>
<feature type="binding site" evidence="1">
    <location>
        <position position="245"/>
    </location>
    <ligand>
        <name>UDP-N-acetyl-alpha-D-glucosamine</name>
        <dbReference type="ChEBI" id="CHEBI:57705"/>
    </ligand>
</feature>
<feature type="binding site" evidence="1">
    <location>
        <begin position="264"/>
        <end position="269"/>
    </location>
    <ligand>
        <name>UDP-N-acetyl-alpha-D-glucosamine</name>
        <dbReference type="ChEBI" id="CHEBI:57705"/>
    </ligand>
</feature>
<feature type="binding site" evidence="1">
    <location>
        <position position="290"/>
    </location>
    <ligand>
        <name>UDP-N-acetyl-alpha-D-glucosamine</name>
        <dbReference type="ChEBI" id="CHEBI:57705"/>
    </ligand>
</feature>
<proteinExistence type="inferred from homology"/>
<evidence type="ECO:0000255" key="1">
    <source>
        <dbReference type="HAMAP-Rule" id="MF_00033"/>
    </source>
</evidence>
<accession>B1J3L2</accession>
<comment type="function">
    <text evidence="1">Cell wall formation. Catalyzes the transfer of a GlcNAc subunit on undecaprenyl-pyrophosphoryl-MurNAc-pentapeptide (lipid intermediate I) to form undecaprenyl-pyrophosphoryl-MurNAc-(pentapeptide)GlcNAc (lipid intermediate II).</text>
</comment>
<comment type="catalytic activity">
    <reaction evidence="1">
        <text>di-trans,octa-cis-undecaprenyl diphospho-N-acetyl-alpha-D-muramoyl-L-alanyl-D-glutamyl-meso-2,6-diaminopimeloyl-D-alanyl-D-alanine + UDP-N-acetyl-alpha-D-glucosamine = di-trans,octa-cis-undecaprenyl diphospho-[N-acetyl-alpha-D-glucosaminyl-(1-&gt;4)]-N-acetyl-alpha-D-muramoyl-L-alanyl-D-glutamyl-meso-2,6-diaminopimeloyl-D-alanyl-D-alanine + UDP + H(+)</text>
        <dbReference type="Rhea" id="RHEA:31227"/>
        <dbReference type="ChEBI" id="CHEBI:15378"/>
        <dbReference type="ChEBI" id="CHEBI:57705"/>
        <dbReference type="ChEBI" id="CHEBI:58223"/>
        <dbReference type="ChEBI" id="CHEBI:61387"/>
        <dbReference type="ChEBI" id="CHEBI:61388"/>
        <dbReference type="EC" id="2.4.1.227"/>
    </reaction>
</comment>
<comment type="pathway">
    <text evidence="1">Cell wall biogenesis; peptidoglycan biosynthesis.</text>
</comment>
<comment type="subcellular location">
    <subcellularLocation>
        <location evidence="1">Cell inner membrane</location>
        <topology evidence="1">Peripheral membrane protein</topology>
        <orientation evidence="1">Cytoplasmic side</orientation>
    </subcellularLocation>
</comment>
<comment type="similarity">
    <text evidence="1">Belongs to the glycosyltransferase 28 family. MurG subfamily.</text>
</comment>
<gene>
    <name evidence="1" type="primary">murG</name>
    <name type="ordered locus">PputW619_0944</name>
</gene>
<dbReference type="EC" id="2.4.1.227" evidence="1"/>
<dbReference type="EMBL" id="CP000949">
    <property type="protein sequence ID" value="ACA71449.1"/>
    <property type="molecule type" value="Genomic_DNA"/>
</dbReference>
<dbReference type="SMR" id="B1J3L2"/>
<dbReference type="STRING" id="390235.PputW619_0944"/>
<dbReference type="CAZy" id="GT28">
    <property type="family name" value="Glycosyltransferase Family 28"/>
</dbReference>
<dbReference type="KEGG" id="ppw:PputW619_0944"/>
<dbReference type="eggNOG" id="COG0707">
    <property type="taxonomic scope" value="Bacteria"/>
</dbReference>
<dbReference type="HOGENOM" id="CLU_037404_2_0_6"/>
<dbReference type="OrthoDB" id="9808936at2"/>
<dbReference type="UniPathway" id="UPA00219"/>
<dbReference type="GO" id="GO:0005886">
    <property type="term" value="C:plasma membrane"/>
    <property type="evidence" value="ECO:0007669"/>
    <property type="project" value="UniProtKB-SubCell"/>
</dbReference>
<dbReference type="GO" id="GO:0051991">
    <property type="term" value="F:UDP-N-acetyl-D-glucosamine:N-acetylmuramoyl-L-alanyl-D-glutamyl-meso-2,6-diaminopimelyl-D-alanyl-D-alanine-diphosphoundecaprenol 4-beta-N-acetylglucosaminlytransferase activity"/>
    <property type="evidence" value="ECO:0007669"/>
    <property type="project" value="RHEA"/>
</dbReference>
<dbReference type="GO" id="GO:0050511">
    <property type="term" value="F:undecaprenyldiphospho-muramoylpentapeptide beta-N-acetylglucosaminyltransferase activity"/>
    <property type="evidence" value="ECO:0007669"/>
    <property type="project" value="UniProtKB-UniRule"/>
</dbReference>
<dbReference type="GO" id="GO:0005975">
    <property type="term" value="P:carbohydrate metabolic process"/>
    <property type="evidence" value="ECO:0007669"/>
    <property type="project" value="InterPro"/>
</dbReference>
<dbReference type="GO" id="GO:0051301">
    <property type="term" value="P:cell division"/>
    <property type="evidence" value="ECO:0007669"/>
    <property type="project" value="UniProtKB-KW"/>
</dbReference>
<dbReference type="GO" id="GO:0071555">
    <property type="term" value="P:cell wall organization"/>
    <property type="evidence" value="ECO:0007669"/>
    <property type="project" value="UniProtKB-KW"/>
</dbReference>
<dbReference type="GO" id="GO:0030259">
    <property type="term" value="P:lipid glycosylation"/>
    <property type="evidence" value="ECO:0007669"/>
    <property type="project" value="UniProtKB-UniRule"/>
</dbReference>
<dbReference type="GO" id="GO:0009252">
    <property type="term" value="P:peptidoglycan biosynthetic process"/>
    <property type="evidence" value="ECO:0007669"/>
    <property type="project" value="UniProtKB-UniRule"/>
</dbReference>
<dbReference type="GO" id="GO:0008360">
    <property type="term" value="P:regulation of cell shape"/>
    <property type="evidence" value="ECO:0007669"/>
    <property type="project" value="UniProtKB-KW"/>
</dbReference>
<dbReference type="CDD" id="cd03785">
    <property type="entry name" value="GT28_MurG"/>
    <property type="match status" value="1"/>
</dbReference>
<dbReference type="Gene3D" id="3.40.50.2000">
    <property type="entry name" value="Glycogen Phosphorylase B"/>
    <property type="match status" value="2"/>
</dbReference>
<dbReference type="HAMAP" id="MF_00033">
    <property type="entry name" value="MurG"/>
    <property type="match status" value="1"/>
</dbReference>
<dbReference type="InterPro" id="IPR006009">
    <property type="entry name" value="GlcNAc_MurG"/>
</dbReference>
<dbReference type="InterPro" id="IPR007235">
    <property type="entry name" value="Glyco_trans_28_C"/>
</dbReference>
<dbReference type="InterPro" id="IPR004276">
    <property type="entry name" value="GlycoTrans_28_N"/>
</dbReference>
<dbReference type="NCBIfam" id="TIGR01133">
    <property type="entry name" value="murG"/>
    <property type="match status" value="1"/>
</dbReference>
<dbReference type="PANTHER" id="PTHR21015:SF22">
    <property type="entry name" value="GLYCOSYLTRANSFERASE"/>
    <property type="match status" value="1"/>
</dbReference>
<dbReference type="PANTHER" id="PTHR21015">
    <property type="entry name" value="UDP-N-ACETYLGLUCOSAMINE--N-ACETYLMURAMYL-(PENTAPEPTIDE) PYROPHOSPHORYL-UNDECAPRENOL N-ACETYLGLUCOSAMINE TRANSFERASE 1"/>
    <property type="match status" value="1"/>
</dbReference>
<dbReference type="Pfam" id="PF04101">
    <property type="entry name" value="Glyco_tran_28_C"/>
    <property type="match status" value="1"/>
</dbReference>
<dbReference type="Pfam" id="PF03033">
    <property type="entry name" value="Glyco_transf_28"/>
    <property type="match status" value="1"/>
</dbReference>
<dbReference type="SUPFAM" id="SSF53756">
    <property type="entry name" value="UDP-Glycosyltransferase/glycogen phosphorylase"/>
    <property type="match status" value="1"/>
</dbReference>